<dbReference type="SMR" id="P61102"/>
<dbReference type="ArachnoServer" id="AS000123">
    <property type="toxin name" value="mu-segestritoxin-Sf1h"/>
</dbReference>
<dbReference type="GO" id="GO:0005576">
    <property type="term" value="C:extracellular region"/>
    <property type="evidence" value="ECO:0007669"/>
    <property type="project" value="UniProtKB-SubCell"/>
</dbReference>
<dbReference type="GO" id="GO:0090729">
    <property type="term" value="F:toxin activity"/>
    <property type="evidence" value="ECO:0007669"/>
    <property type="project" value="UniProtKB-KW"/>
</dbReference>
<dbReference type="Gene3D" id="4.10.40.60">
    <property type="match status" value="1"/>
</dbReference>
<dbReference type="InterPro" id="IPR053718">
    <property type="entry name" value="Insecticidal_knottin-like_sf"/>
</dbReference>
<dbReference type="InterPro" id="IPR012633">
    <property type="entry name" value="Toxin_28"/>
</dbReference>
<dbReference type="Pfam" id="PF08115">
    <property type="entry name" value="Toxin_28"/>
    <property type="match status" value="1"/>
</dbReference>
<comment type="function">
    <text evidence="1">Insecticidal toxin. It inhibits insect voltage-gated sodium channels (Nav) by partially blocking the channel pore in DUM neurons from the American cockroach, not by acting as a gating modifier. The inhibition is only partially reversible after prolonged washout. In vivo, the toxin causes flaccid paralysis followed by death when injected into Heliothis virescens larvae. It also causes uncoordinated movements followed by full paralysis to sheep blowflies (Lucilia cuprina). When the toxin is fused to snowdrop lectin, it is orally active against larvae of the tomato moth (Laconobia oleracea), the rice brown planthopper (Nilaparvata lugens), and the peach-potato aphid (Myzus persicae).</text>
</comment>
<comment type="subcellular location">
    <subcellularLocation>
        <location evidence="1">Secreted</location>
    </subcellularLocation>
</comment>
<comment type="tissue specificity">
    <text evidence="4">Expressed by the venom gland.</text>
</comment>
<comment type="domain">
    <text evidence="1">The presence of a 'disulfide through disulfide knot' structurally defines this protein as a knottin.</text>
</comment>
<comment type="similarity">
    <text evidence="3">Belongs to the neurotoxin 16 (SFI) family.</text>
</comment>
<accession>P61102</accession>
<protein>
    <recommendedName>
        <fullName evidence="3">Mu-segestritoxin-Sf1h</fullName>
        <shortName evidence="3">Mu-SGTX-Sf1h</shortName>
    </recommendedName>
    <alternativeName>
        <fullName evidence="2">Toxin SFI8</fullName>
    </alternativeName>
</protein>
<feature type="chain" id="PRO_0000087623" description="Mu-segestritoxin-Sf1h" evidence="4">
    <location>
        <begin position="1"/>
        <end position="46"/>
    </location>
</feature>
<feature type="region of interest" description="Keys region for toxin activity" evidence="1">
    <location>
        <begin position="31"/>
        <end position="33"/>
    </location>
</feature>
<feature type="disulfide bond" evidence="1">
    <location>
        <begin position="3"/>
        <end position="19"/>
    </location>
</feature>
<feature type="disulfide bond" evidence="1">
    <location>
        <begin position="10"/>
        <end position="22"/>
    </location>
</feature>
<feature type="disulfide bond" evidence="1">
    <location>
        <begin position="18"/>
        <end position="42"/>
    </location>
</feature>
<feature type="disulfide bond" evidence="1">
    <location>
        <begin position="24"/>
        <end position="40"/>
    </location>
</feature>
<proteinExistence type="inferred from homology"/>
<keyword id="KW-1015">Disulfide bond</keyword>
<keyword id="KW-0960">Knottin</keyword>
<keyword id="KW-0964">Secreted</keyword>
<keyword id="KW-0800">Toxin</keyword>
<sequence length="46" mass="4941">KECMADGTVCYIHNHNDCCGSCLCPNGPLARPWEMLVGNCKCGPKA</sequence>
<organism>
    <name type="scientific">Segestria florentina</name>
    <name type="common">Tube-web spider</name>
    <name type="synonym">Segestria gracilis</name>
    <dbReference type="NCBI Taxonomy" id="31925"/>
    <lineage>
        <taxon>Eukaryota</taxon>
        <taxon>Metazoa</taxon>
        <taxon>Ecdysozoa</taxon>
        <taxon>Arthropoda</taxon>
        <taxon>Chelicerata</taxon>
        <taxon>Arachnida</taxon>
        <taxon>Araneae</taxon>
        <taxon>Araneomorphae</taxon>
        <taxon>Haplogynae</taxon>
        <taxon>Dysderoidea</taxon>
        <taxon>Segestriidae</taxon>
        <taxon>Segestria</taxon>
    </lineage>
</organism>
<name>SFI8_SEGFL</name>
<evidence type="ECO:0000250" key="1">
    <source>
        <dbReference type="UniProtKB" id="P61095"/>
    </source>
</evidence>
<evidence type="ECO:0000303" key="2">
    <source>
    </source>
</evidence>
<evidence type="ECO:0000305" key="3"/>
<evidence type="ECO:0000305" key="4">
    <source>
    </source>
</evidence>
<reference key="1">
    <citation type="journal article" date="2002" name="Toxicon">
        <title>Novel insecticidal toxins from the venom of the spider Segestria florentina.</title>
        <authorList>
            <person name="Lipkin A."/>
            <person name="Kozlov S."/>
            <person name="Nosyreva E."/>
            <person name="Blake A."/>
            <person name="Windass J.D."/>
            <person name="Grishin E."/>
        </authorList>
    </citation>
    <scope>NUCLEOTIDE SEQUENCE [MRNA]</scope>
    <source>
        <tissue>Venom gland</tissue>
    </source>
</reference>